<dbReference type="EMBL" id="CP000139">
    <property type="protein sequence ID" value="ABR39044.1"/>
    <property type="molecule type" value="Genomic_DNA"/>
</dbReference>
<dbReference type="RefSeq" id="WP_011965153.1">
    <property type="nucleotide sequence ID" value="NZ_JANSWM010000103.1"/>
</dbReference>
<dbReference type="SMR" id="A6L030"/>
<dbReference type="STRING" id="435590.BVU_1355"/>
<dbReference type="PaxDb" id="435590-BVU_1355"/>
<dbReference type="GeneID" id="5302321"/>
<dbReference type="KEGG" id="bvu:BVU_1355"/>
<dbReference type="eggNOG" id="COG0532">
    <property type="taxonomic scope" value="Bacteria"/>
</dbReference>
<dbReference type="HOGENOM" id="CLU_006301_0_1_10"/>
<dbReference type="BioCyc" id="BVUL435590:G1G59-1413-MONOMER"/>
<dbReference type="Proteomes" id="UP000002861">
    <property type="component" value="Chromosome"/>
</dbReference>
<dbReference type="GO" id="GO:0005737">
    <property type="term" value="C:cytoplasm"/>
    <property type="evidence" value="ECO:0007669"/>
    <property type="project" value="UniProtKB-SubCell"/>
</dbReference>
<dbReference type="GO" id="GO:0005525">
    <property type="term" value="F:GTP binding"/>
    <property type="evidence" value="ECO:0007669"/>
    <property type="project" value="UniProtKB-KW"/>
</dbReference>
<dbReference type="GO" id="GO:0003924">
    <property type="term" value="F:GTPase activity"/>
    <property type="evidence" value="ECO:0007669"/>
    <property type="project" value="UniProtKB-UniRule"/>
</dbReference>
<dbReference type="GO" id="GO:0003743">
    <property type="term" value="F:translation initiation factor activity"/>
    <property type="evidence" value="ECO:0007669"/>
    <property type="project" value="UniProtKB-UniRule"/>
</dbReference>
<dbReference type="CDD" id="cd01887">
    <property type="entry name" value="IF2_eIF5B"/>
    <property type="match status" value="1"/>
</dbReference>
<dbReference type="CDD" id="cd03702">
    <property type="entry name" value="IF2_mtIF2_II"/>
    <property type="match status" value="1"/>
</dbReference>
<dbReference type="CDD" id="cd03692">
    <property type="entry name" value="mtIF2_IVc"/>
    <property type="match status" value="1"/>
</dbReference>
<dbReference type="FunFam" id="2.40.30.10:FF:000007">
    <property type="entry name" value="Translation initiation factor IF-2"/>
    <property type="match status" value="1"/>
</dbReference>
<dbReference type="FunFam" id="2.40.30.10:FF:000008">
    <property type="entry name" value="Translation initiation factor IF-2"/>
    <property type="match status" value="1"/>
</dbReference>
<dbReference type="FunFam" id="3.40.50.10050:FF:000001">
    <property type="entry name" value="Translation initiation factor IF-2"/>
    <property type="match status" value="1"/>
</dbReference>
<dbReference type="FunFam" id="3.40.50.300:FF:000019">
    <property type="entry name" value="Translation initiation factor IF-2"/>
    <property type="match status" value="1"/>
</dbReference>
<dbReference type="Gene3D" id="3.40.50.300">
    <property type="entry name" value="P-loop containing nucleotide triphosphate hydrolases"/>
    <property type="match status" value="1"/>
</dbReference>
<dbReference type="Gene3D" id="2.40.30.10">
    <property type="entry name" value="Translation factors"/>
    <property type="match status" value="2"/>
</dbReference>
<dbReference type="Gene3D" id="3.40.50.10050">
    <property type="entry name" value="Translation initiation factor IF- 2, domain 3"/>
    <property type="match status" value="1"/>
</dbReference>
<dbReference type="HAMAP" id="MF_00100_B">
    <property type="entry name" value="IF_2_B"/>
    <property type="match status" value="1"/>
</dbReference>
<dbReference type="InterPro" id="IPR053905">
    <property type="entry name" value="EF-G-like_DII"/>
</dbReference>
<dbReference type="InterPro" id="IPR044145">
    <property type="entry name" value="IF2_II"/>
</dbReference>
<dbReference type="InterPro" id="IPR006847">
    <property type="entry name" value="IF2_N"/>
</dbReference>
<dbReference type="InterPro" id="IPR027417">
    <property type="entry name" value="P-loop_NTPase"/>
</dbReference>
<dbReference type="InterPro" id="IPR005225">
    <property type="entry name" value="Small_GTP-bd"/>
</dbReference>
<dbReference type="InterPro" id="IPR000795">
    <property type="entry name" value="T_Tr_GTP-bd_dom"/>
</dbReference>
<dbReference type="InterPro" id="IPR000178">
    <property type="entry name" value="TF_IF2_bacterial-like"/>
</dbReference>
<dbReference type="InterPro" id="IPR015760">
    <property type="entry name" value="TIF_IF2"/>
</dbReference>
<dbReference type="InterPro" id="IPR023115">
    <property type="entry name" value="TIF_IF2_dom3"/>
</dbReference>
<dbReference type="InterPro" id="IPR036925">
    <property type="entry name" value="TIF_IF2_dom3_sf"/>
</dbReference>
<dbReference type="InterPro" id="IPR009000">
    <property type="entry name" value="Transl_B-barrel_sf"/>
</dbReference>
<dbReference type="NCBIfam" id="TIGR00487">
    <property type="entry name" value="IF-2"/>
    <property type="match status" value="1"/>
</dbReference>
<dbReference type="NCBIfam" id="TIGR00231">
    <property type="entry name" value="small_GTP"/>
    <property type="match status" value="1"/>
</dbReference>
<dbReference type="PANTHER" id="PTHR43381:SF5">
    <property type="entry name" value="TR-TYPE G DOMAIN-CONTAINING PROTEIN"/>
    <property type="match status" value="1"/>
</dbReference>
<dbReference type="PANTHER" id="PTHR43381">
    <property type="entry name" value="TRANSLATION INITIATION FACTOR IF-2-RELATED"/>
    <property type="match status" value="1"/>
</dbReference>
<dbReference type="Pfam" id="PF22042">
    <property type="entry name" value="EF-G_D2"/>
    <property type="match status" value="1"/>
</dbReference>
<dbReference type="Pfam" id="PF00009">
    <property type="entry name" value="GTP_EFTU"/>
    <property type="match status" value="1"/>
</dbReference>
<dbReference type="Pfam" id="PF11987">
    <property type="entry name" value="IF-2"/>
    <property type="match status" value="1"/>
</dbReference>
<dbReference type="Pfam" id="PF04760">
    <property type="entry name" value="IF2_N"/>
    <property type="match status" value="1"/>
</dbReference>
<dbReference type="SUPFAM" id="SSF52156">
    <property type="entry name" value="Initiation factor IF2/eIF5b, domain 3"/>
    <property type="match status" value="1"/>
</dbReference>
<dbReference type="SUPFAM" id="SSF52540">
    <property type="entry name" value="P-loop containing nucleoside triphosphate hydrolases"/>
    <property type="match status" value="1"/>
</dbReference>
<dbReference type="SUPFAM" id="SSF50447">
    <property type="entry name" value="Translation proteins"/>
    <property type="match status" value="2"/>
</dbReference>
<dbReference type="PROSITE" id="PS51722">
    <property type="entry name" value="G_TR_2"/>
    <property type="match status" value="1"/>
</dbReference>
<dbReference type="PROSITE" id="PS01176">
    <property type="entry name" value="IF2"/>
    <property type="match status" value="1"/>
</dbReference>
<accession>A6L030</accession>
<organism>
    <name type="scientific">Phocaeicola vulgatus (strain ATCC 8482 / DSM 1447 / JCM 5826 / CCUG 4940 / NBRC 14291 / NCTC 11154)</name>
    <name type="common">Bacteroides vulgatus</name>
    <dbReference type="NCBI Taxonomy" id="435590"/>
    <lineage>
        <taxon>Bacteria</taxon>
        <taxon>Pseudomonadati</taxon>
        <taxon>Bacteroidota</taxon>
        <taxon>Bacteroidia</taxon>
        <taxon>Bacteroidales</taxon>
        <taxon>Bacteroidaceae</taxon>
        <taxon>Phocaeicola</taxon>
    </lineage>
</organism>
<reference key="1">
    <citation type="journal article" date="2007" name="PLoS Biol.">
        <title>Evolution of symbiotic bacteria in the distal human intestine.</title>
        <authorList>
            <person name="Xu J."/>
            <person name="Mahowald M.A."/>
            <person name="Ley R.E."/>
            <person name="Lozupone C.A."/>
            <person name="Hamady M."/>
            <person name="Martens E.C."/>
            <person name="Henrissat B."/>
            <person name="Coutinho P.M."/>
            <person name="Minx P."/>
            <person name="Latreille P."/>
            <person name="Cordum H."/>
            <person name="Van Brunt A."/>
            <person name="Kim K."/>
            <person name="Fulton R.S."/>
            <person name="Fulton L.A."/>
            <person name="Clifton S.W."/>
            <person name="Wilson R.K."/>
            <person name="Knight R.D."/>
            <person name="Gordon J.I."/>
        </authorList>
    </citation>
    <scope>NUCLEOTIDE SEQUENCE [LARGE SCALE GENOMIC DNA]</scope>
    <source>
        <strain>ATCC 8482 / DSM 1447 / JCM 5826 / CCUG 4940 / NBRC 14291 / NCTC 11154</strain>
    </source>
</reference>
<gene>
    <name evidence="2" type="primary">infB</name>
    <name type="ordered locus">BVU_1355</name>
</gene>
<feature type="chain" id="PRO_1000008200" description="Translation initiation factor IF-2">
    <location>
        <begin position="1"/>
        <end position="1003"/>
    </location>
</feature>
<feature type="domain" description="tr-type G">
    <location>
        <begin position="502"/>
        <end position="672"/>
    </location>
</feature>
<feature type="region of interest" description="Disordered" evidence="3">
    <location>
        <begin position="61"/>
        <end position="81"/>
    </location>
</feature>
<feature type="region of interest" description="Disordered" evidence="3">
    <location>
        <begin position="135"/>
        <end position="362"/>
    </location>
</feature>
<feature type="region of interest" description="G1" evidence="1">
    <location>
        <begin position="511"/>
        <end position="518"/>
    </location>
</feature>
<feature type="region of interest" description="G2" evidence="1">
    <location>
        <begin position="536"/>
        <end position="540"/>
    </location>
</feature>
<feature type="region of interest" description="G3" evidence="1">
    <location>
        <begin position="558"/>
        <end position="561"/>
    </location>
</feature>
<feature type="region of interest" description="G4" evidence="1">
    <location>
        <begin position="612"/>
        <end position="615"/>
    </location>
</feature>
<feature type="region of interest" description="G5" evidence="1">
    <location>
        <begin position="648"/>
        <end position="650"/>
    </location>
</feature>
<feature type="compositionally biased region" description="Basic and acidic residues" evidence="3">
    <location>
        <begin position="61"/>
        <end position="74"/>
    </location>
</feature>
<feature type="compositionally biased region" description="Basic and acidic residues" evidence="3">
    <location>
        <begin position="139"/>
        <end position="169"/>
    </location>
</feature>
<feature type="compositionally biased region" description="Basic and acidic residues" evidence="3">
    <location>
        <begin position="180"/>
        <end position="206"/>
    </location>
</feature>
<feature type="compositionally biased region" description="Basic and acidic residues" evidence="3">
    <location>
        <begin position="219"/>
        <end position="229"/>
    </location>
</feature>
<feature type="compositionally biased region" description="Basic and acidic residues" evidence="3">
    <location>
        <begin position="252"/>
        <end position="290"/>
    </location>
</feature>
<feature type="compositionally biased region" description="Low complexity" evidence="3">
    <location>
        <begin position="315"/>
        <end position="350"/>
    </location>
</feature>
<feature type="binding site" evidence="2">
    <location>
        <begin position="511"/>
        <end position="518"/>
    </location>
    <ligand>
        <name>GTP</name>
        <dbReference type="ChEBI" id="CHEBI:37565"/>
    </ligand>
</feature>
<feature type="binding site" evidence="2">
    <location>
        <begin position="558"/>
        <end position="562"/>
    </location>
    <ligand>
        <name>GTP</name>
        <dbReference type="ChEBI" id="CHEBI:37565"/>
    </ligand>
</feature>
<feature type="binding site" evidence="2">
    <location>
        <begin position="612"/>
        <end position="615"/>
    </location>
    <ligand>
        <name>GTP</name>
        <dbReference type="ChEBI" id="CHEBI:37565"/>
    </ligand>
</feature>
<protein>
    <recommendedName>
        <fullName evidence="2">Translation initiation factor IF-2</fullName>
    </recommendedName>
</protein>
<sequence>MTIRLNKVTRDLNVGITTVVEFLQKKGYTIEASPNAKITEEQYAVLVKEFSTDKNLKIESEKFSQERQNKDRNKASISIEGFESKKEKEEVVKTVIPEEARPKLKQVGKIDLDNLNKKTAPKVVEPAAKVIEQTPKAEPVVEKVVERKETPQPEKETPKPVVVEEKKPEPAPQPAPAPVLEEKKEPKIEKTEEKTPQVKEMEKETPEAAPVQEKEEDDVFKIRPTEFKSKINVVGQIDLAALNQSTRPKKKSKEEKRKEREEKDKQRQEQRKLMKDAIIKEIRKGDDKISKNSVNDDAAKKKKRNRINKERVDINAAGTTNAGGASNNNQRNDNANRPNRNNNSKPNGNNNQGGGKFNKDRFKKPVVKAEVSDEDVAKQVKETLARLTNKTKNKAAKYRKEKRENVQNRLMEQEEMEQEDSKILKLTEFVTANELASMMDIPVTQVIATCMSIGIMVSINQRLDAETINLVAEEFGYKTEYVSAEVAQAITEEEDNEEDLQPRAPIVTVMGHVDHGKTSLLDYIRKANVIAGEAGGITQHIGAYNVKLEDGRHITFLDTPGHEAFTAMRARGAKVTDIAIIIVAADDNVMPQTKEAINHAMAAGVPIVFAINKVDKPHANPDKIKEELAAMNFLVEEWGGKYQSQDISAKKGTGVHDLLEKVLLEAEMLDLKANPDRKATGSIIESSLDKGRGYVATMLVANGTLKMGDIVLAGTSYGKVKAMFNERNQRIKEAGPSEPVLILGLNGAPAAGDTFHVIDTEQEARDIANKREQLQREQGLRTQKLLTLDEVGRRLALGDFHELNVIVKGDVDGSVEALSDSLIKLSTEQVQVNVIHKGVGQISESDVTLAAASDAIIVGFQVRPSSSAGKLAEQEGVDIRKYSVIYDAIEEVKAAMEGMLAPTLKEQITATIEVREVFNITKVGLVAGAMVKTGKVKRSDKARLIRDGIVVFTGAINALKRFKDDVKEVGTNFECGISLTNCNDIKVGDIIEAYEEVEVKQTL</sequence>
<proteinExistence type="inferred from homology"/>
<comment type="function">
    <text evidence="2">One of the essential components for the initiation of protein synthesis. Protects formylmethionyl-tRNA from spontaneous hydrolysis and promotes its binding to the 30S ribosomal subunits. Also involved in the hydrolysis of GTP during the formation of the 70S ribosomal complex.</text>
</comment>
<comment type="subcellular location">
    <subcellularLocation>
        <location evidence="2">Cytoplasm</location>
    </subcellularLocation>
</comment>
<comment type="similarity">
    <text evidence="2">Belongs to the TRAFAC class translation factor GTPase superfamily. Classic translation factor GTPase family. IF-2 subfamily.</text>
</comment>
<name>IF2_PHOV8</name>
<evidence type="ECO:0000250" key="1"/>
<evidence type="ECO:0000255" key="2">
    <source>
        <dbReference type="HAMAP-Rule" id="MF_00100"/>
    </source>
</evidence>
<evidence type="ECO:0000256" key="3">
    <source>
        <dbReference type="SAM" id="MobiDB-lite"/>
    </source>
</evidence>
<keyword id="KW-0963">Cytoplasm</keyword>
<keyword id="KW-0342">GTP-binding</keyword>
<keyword id="KW-0396">Initiation factor</keyword>
<keyword id="KW-0547">Nucleotide-binding</keyword>
<keyword id="KW-0648">Protein biosynthesis</keyword>